<protein>
    <recommendedName>
        <fullName evidence="1">ATP-dependent Clp protease adapter protein ClpS</fullName>
    </recommendedName>
</protein>
<accession>P67649</accession>
<accession>Q8XG13</accession>
<name>CLPS_SALTY</name>
<comment type="function">
    <text evidence="1">Involved in the modulation of the specificity of the ClpAP-mediated ATP-dependent protein degradation.</text>
</comment>
<comment type="subunit">
    <text evidence="1">Binds to the N-terminal domain of the chaperone ClpA.</text>
</comment>
<comment type="similarity">
    <text evidence="1">Belongs to the ClpS family.</text>
</comment>
<feature type="chain" id="PRO_0000215747" description="ATP-dependent Clp protease adapter protein ClpS">
    <location>
        <begin position="1"/>
        <end position="106"/>
    </location>
</feature>
<dbReference type="EMBL" id="AE006468">
    <property type="protein sequence ID" value="AAL19880.1"/>
    <property type="molecule type" value="Genomic_DNA"/>
</dbReference>
<dbReference type="RefSeq" id="WP_000520789.1">
    <property type="nucleotide sequence ID" value="NC_003197.2"/>
</dbReference>
<dbReference type="SMR" id="P67649"/>
<dbReference type="STRING" id="99287.STM0944"/>
<dbReference type="PaxDb" id="99287-STM0944"/>
<dbReference type="KEGG" id="stm:STM0944"/>
<dbReference type="PATRIC" id="fig|99287.12.peg.996"/>
<dbReference type="HOGENOM" id="CLU_134358_2_1_6"/>
<dbReference type="OMA" id="DDFTPMD"/>
<dbReference type="PhylomeDB" id="P67649"/>
<dbReference type="BioCyc" id="SENT99287:STM0944-MONOMER"/>
<dbReference type="Proteomes" id="UP000001014">
    <property type="component" value="Chromosome"/>
</dbReference>
<dbReference type="GO" id="GO:0030163">
    <property type="term" value="P:protein catabolic process"/>
    <property type="evidence" value="ECO:0007669"/>
    <property type="project" value="InterPro"/>
</dbReference>
<dbReference type="GO" id="GO:0006508">
    <property type="term" value="P:proteolysis"/>
    <property type="evidence" value="ECO:0007669"/>
    <property type="project" value="UniProtKB-UniRule"/>
</dbReference>
<dbReference type="FunFam" id="3.30.1390.10:FF:000002">
    <property type="entry name" value="ATP-dependent Clp protease adapter protein ClpS"/>
    <property type="match status" value="1"/>
</dbReference>
<dbReference type="Gene3D" id="3.30.1390.10">
    <property type="match status" value="1"/>
</dbReference>
<dbReference type="HAMAP" id="MF_00302">
    <property type="entry name" value="ClpS"/>
    <property type="match status" value="1"/>
</dbReference>
<dbReference type="InterPro" id="IPR022935">
    <property type="entry name" value="ClpS"/>
</dbReference>
<dbReference type="InterPro" id="IPR003769">
    <property type="entry name" value="ClpS_core"/>
</dbReference>
<dbReference type="InterPro" id="IPR014719">
    <property type="entry name" value="Ribosomal_bL12_C/ClpS-like"/>
</dbReference>
<dbReference type="NCBIfam" id="NF000670">
    <property type="entry name" value="PRK00033.1-3"/>
    <property type="match status" value="1"/>
</dbReference>
<dbReference type="NCBIfam" id="NF000672">
    <property type="entry name" value="PRK00033.1-5"/>
    <property type="match status" value="1"/>
</dbReference>
<dbReference type="PANTHER" id="PTHR33473:SF19">
    <property type="entry name" value="ATP-DEPENDENT CLP PROTEASE ADAPTER PROTEIN CLPS"/>
    <property type="match status" value="1"/>
</dbReference>
<dbReference type="PANTHER" id="PTHR33473">
    <property type="entry name" value="ATP-DEPENDENT CLP PROTEASE ADAPTER PROTEIN CLPS1, CHLOROPLASTIC"/>
    <property type="match status" value="1"/>
</dbReference>
<dbReference type="Pfam" id="PF02617">
    <property type="entry name" value="ClpS"/>
    <property type="match status" value="1"/>
</dbReference>
<dbReference type="SUPFAM" id="SSF54736">
    <property type="entry name" value="ClpS-like"/>
    <property type="match status" value="1"/>
</dbReference>
<proteinExistence type="inferred from homology"/>
<reference key="1">
    <citation type="journal article" date="2001" name="Nature">
        <title>Complete genome sequence of Salmonella enterica serovar Typhimurium LT2.</title>
        <authorList>
            <person name="McClelland M."/>
            <person name="Sanderson K.E."/>
            <person name="Spieth J."/>
            <person name="Clifton S.W."/>
            <person name="Latreille P."/>
            <person name="Courtney L."/>
            <person name="Porwollik S."/>
            <person name="Ali J."/>
            <person name="Dante M."/>
            <person name="Du F."/>
            <person name="Hou S."/>
            <person name="Layman D."/>
            <person name="Leonard S."/>
            <person name="Nguyen C."/>
            <person name="Scott K."/>
            <person name="Holmes A."/>
            <person name="Grewal N."/>
            <person name="Mulvaney E."/>
            <person name="Ryan E."/>
            <person name="Sun H."/>
            <person name="Florea L."/>
            <person name="Miller W."/>
            <person name="Stoneking T."/>
            <person name="Nhan M."/>
            <person name="Waterston R."/>
            <person name="Wilson R.K."/>
        </authorList>
    </citation>
    <scope>NUCLEOTIDE SEQUENCE [LARGE SCALE GENOMIC DNA]</scope>
    <source>
        <strain>LT2 / SGSC1412 / ATCC 700720</strain>
    </source>
</reference>
<organism>
    <name type="scientific">Salmonella typhimurium (strain LT2 / SGSC1412 / ATCC 700720)</name>
    <dbReference type="NCBI Taxonomy" id="99287"/>
    <lineage>
        <taxon>Bacteria</taxon>
        <taxon>Pseudomonadati</taxon>
        <taxon>Pseudomonadota</taxon>
        <taxon>Gammaproteobacteria</taxon>
        <taxon>Enterobacterales</taxon>
        <taxon>Enterobacteriaceae</taxon>
        <taxon>Salmonella</taxon>
    </lineage>
</organism>
<gene>
    <name evidence="1" type="primary">clpS</name>
    <name type="ordered locus">STM0944</name>
</gene>
<sequence length="106" mass="12152">MGKTNDWLDFDQLVEDSVRDALKPPSMYKVILVNDDYTPMEFVIDVLQKFFSYDVERATQLMLAVHYQGKAICGVFTAEVAETKVAMVNKYARENEHPLLCTLEKA</sequence>
<evidence type="ECO:0000255" key="1">
    <source>
        <dbReference type="HAMAP-Rule" id="MF_00302"/>
    </source>
</evidence>
<keyword id="KW-1185">Reference proteome</keyword>